<comment type="function">
    <text evidence="1">Photosystem II (PSII) is a light-driven water:plastoquinone oxidoreductase that uses light energy to abstract electrons from H(2)O, generating O(2) and a proton gradient subsequently used for ATP formation. It consists of a core antenna complex that captures photons, and an electron transfer chain that converts photonic excitation into a charge separation. The D1/D2 (PsbA/PsbD) reaction center heterodimer binds P680, the primary electron donor of PSII as well as several subsequent electron acceptors.</text>
</comment>
<comment type="catalytic activity">
    <reaction evidence="1">
        <text>2 a plastoquinone + 4 hnu + 2 H2O = 2 a plastoquinol + O2</text>
        <dbReference type="Rhea" id="RHEA:36359"/>
        <dbReference type="Rhea" id="RHEA-COMP:9561"/>
        <dbReference type="Rhea" id="RHEA-COMP:9562"/>
        <dbReference type="ChEBI" id="CHEBI:15377"/>
        <dbReference type="ChEBI" id="CHEBI:15379"/>
        <dbReference type="ChEBI" id="CHEBI:17757"/>
        <dbReference type="ChEBI" id="CHEBI:30212"/>
        <dbReference type="ChEBI" id="CHEBI:62192"/>
        <dbReference type="EC" id="1.10.3.9"/>
    </reaction>
</comment>
<comment type="cofactor">
    <text evidence="1">The D1/D2 heterodimer binds P680, chlorophylls that are the primary electron donor of PSII, and subsequent electron acceptors. It shares a non-heme iron and each subunit binds pheophytin, quinone, additional chlorophylls, carotenoids and lipids. D1 provides most of the ligands for the Mn4-Ca-O5 cluster of the oxygen-evolving complex (OEC). There is also a Cl(-1) ion associated with D1 and D2, which is required for oxygen evolution. The PSII complex binds additional chlorophylls, carotenoids and specific lipids.</text>
</comment>
<comment type="subunit">
    <text evidence="1">PSII is composed of 1 copy each of membrane proteins PsbA, PsbB, PsbC, PsbD, PsbE, PsbF, PsbH, PsbI, PsbJ, PsbK, PsbL, PsbM, PsbT, PsbX, PsbY, PsbZ, Psb30/Ycf12, peripheral proteins PsbO, CyanoQ (PsbQ), PsbU, PsbV and a large number of cofactors. It forms dimeric complexes.</text>
</comment>
<comment type="subcellular location">
    <subcellularLocation>
        <location evidence="1">Cellular thylakoid membrane</location>
        <topology evidence="1">Multi-pass membrane protein</topology>
    </subcellularLocation>
</comment>
<comment type="PTM">
    <text evidence="1">Tyr-161 forms a radical intermediate that is referred to as redox-active TyrZ, YZ or Y-Z.</text>
</comment>
<comment type="PTM">
    <text evidence="1">C-terminally processed by CtpA; processing is essential to allow assembly of the oxygen-evolving complex and thus photosynthetic growth.</text>
</comment>
<comment type="miscellaneous">
    <text evidence="1">Cyanobacteria usually contain more than 2 copies of the psbA gene.</text>
</comment>
<comment type="miscellaneous">
    <text evidence="1">2 of the reaction center chlorophylls (ChlD1 and ChlD2) are entirely coordinated by water.</text>
</comment>
<comment type="miscellaneous">
    <text evidence="1">Herbicides such as atrazine, BNT, diuron or ioxynil bind in the Q(B) binding site and block subsequent electron transfer.</text>
</comment>
<comment type="similarity">
    <text evidence="1">Belongs to the reaction center PufL/M/PsbA/D family.</text>
</comment>
<gene>
    <name evidence="1 2" type="primary">psbA1</name>
    <name type="synonym">psbA-1</name>
</gene>
<protein>
    <recommendedName>
        <fullName evidence="1">Photosystem II protein D1 1</fullName>
        <shortName evidence="1">PSII D1 protein 1</shortName>
        <ecNumber evidence="1">1.10.3.9</ecNumber>
    </recommendedName>
    <alternativeName>
        <fullName evidence="1">Photosystem II Q(B) protein 1</fullName>
    </alternativeName>
</protein>
<accession>P0A445</accession>
<accession>P35876</accession>
<reference key="1">
    <citation type="journal article" date="1995" name="Plant Physiol.">
        <title>The two psbA genes from the thermophilic cyanobacterium Synechococcus elongatus.</title>
        <authorList>
            <person name="Motoki A."/>
            <person name="Shimazu T."/>
            <person name="Hirano M."/>
            <person name="Katoh S."/>
        </authorList>
    </citation>
    <scope>NUCLEOTIDE SEQUENCE [GENOMIC DNA]</scope>
</reference>
<reference key="2">
    <citation type="journal article" date="1993" name="Z. Naturforsch. C">
        <title>Complete sequence of one copy of the psbA gene from the thermophilic cyanobacterium Synechococcus elongatus.</title>
        <authorList>
            <person name="Kloos R."/>
            <person name="Stevens E."/>
            <person name="Oettmeier W."/>
        </authorList>
    </citation>
    <scope>NUCLEOTIDE SEQUENCE [GENOMIC DNA]</scope>
</reference>
<proteinExistence type="inferred from homology"/>
<name>PSBA1_SYNEL</name>
<dbReference type="EC" id="1.10.3.9" evidence="1"/>
<dbReference type="EMBL" id="D14325">
    <property type="protein sequence ID" value="BAA03263.1"/>
    <property type="molecule type" value="Genomic_DNA"/>
</dbReference>
<dbReference type="EMBL" id="Z16081">
    <property type="protein sequence ID" value="CAA78895.1"/>
    <property type="molecule type" value="Genomic_DNA"/>
</dbReference>
<dbReference type="PIR" id="S26586">
    <property type="entry name" value="S26586"/>
</dbReference>
<dbReference type="SMR" id="P0A445"/>
<dbReference type="GO" id="GO:0009523">
    <property type="term" value="C:photosystem II"/>
    <property type="evidence" value="ECO:0007669"/>
    <property type="project" value="UniProtKB-KW"/>
</dbReference>
<dbReference type="GO" id="GO:0031676">
    <property type="term" value="C:plasma membrane-derived thylakoid membrane"/>
    <property type="evidence" value="ECO:0007669"/>
    <property type="project" value="UniProtKB-SubCell"/>
</dbReference>
<dbReference type="GO" id="GO:0016168">
    <property type="term" value="F:chlorophyll binding"/>
    <property type="evidence" value="ECO:0007669"/>
    <property type="project" value="UniProtKB-UniRule"/>
</dbReference>
<dbReference type="GO" id="GO:0045156">
    <property type="term" value="F:electron transporter, transferring electrons within the cyclic electron transport pathway of photosynthesis activity"/>
    <property type="evidence" value="ECO:0007669"/>
    <property type="project" value="InterPro"/>
</dbReference>
<dbReference type="GO" id="GO:0005506">
    <property type="term" value="F:iron ion binding"/>
    <property type="evidence" value="ECO:0007669"/>
    <property type="project" value="UniProtKB-UniRule"/>
</dbReference>
<dbReference type="GO" id="GO:0016682">
    <property type="term" value="F:oxidoreductase activity, acting on diphenols and related substances as donors, oxygen as acceptor"/>
    <property type="evidence" value="ECO:0007669"/>
    <property type="project" value="UniProtKB-UniRule"/>
</dbReference>
<dbReference type="GO" id="GO:0010242">
    <property type="term" value="F:oxygen evolving activity"/>
    <property type="evidence" value="ECO:0007669"/>
    <property type="project" value="UniProtKB-EC"/>
</dbReference>
<dbReference type="GO" id="GO:0009772">
    <property type="term" value="P:photosynthetic electron transport in photosystem II"/>
    <property type="evidence" value="ECO:0007669"/>
    <property type="project" value="InterPro"/>
</dbReference>
<dbReference type="GO" id="GO:0009635">
    <property type="term" value="P:response to herbicide"/>
    <property type="evidence" value="ECO:0007669"/>
    <property type="project" value="UniProtKB-KW"/>
</dbReference>
<dbReference type="CDD" id="cd09289">
    <property type="entry name" value="Photosystem-II_D1"/>
    <property type="match status" value="1"/>
</dbReference>
<dbReference type="FunFam" id="1.20.85.10:FF:000002">
    <property type="entry name" value="Photosystem II protein D1"/>
    <property type="match status" value="1"/>
</dbReference>
<dbReference type="Gene3D" id="1.20.85.10">
    <property type="entry name" value="Photosystem II protein D1-like"/>
    <property type="match status" value="1"/>
</dbReference>
<dbReference type="HAMAP" id="MF_01379">
    <property type="entry name" value="PSII_PsbA_D1"/>
    <property type="match status" value="1"/>
</dbReference>
<dbReference type="InterPro" id="IPR055266">
    <property type="entry name" value="D1/D2"/>
</dbReference>
<dbReference type="InterPro" id="IPR036854">
    <property type="entry name" value="Photo_II_D1/D2_sf"/>
</dbReference>
<dbReference type="InterPro" id="IPR000484">
    <property type="entry name" value="Photo_RC_L/M"/>
</dbReference>
<dbReference type="InterPro" id="IPR055265">
    <property type="entry name" value="Photo_RC_L/M_CS"/>
</dbReference>
<dbReference type="InterPro" id="IPR005867">
    <property type="entry name" value="PSII_D1"/>
</dbReference>
<dbReference type="NCBIfam" id="TIGR01151">
    <property type="entry name" value="psbA"/>
    <property type="match status" value="1"/>
</dbReference>
<dbReference type="PANTHER" id="PTHR33149:SF12">
    <property type="entry name" value="PHOTOSYSTEM II D2 PROTEIN"/>
    <property type="match status" value="1"/>
</dbReference>
<dbReference type="PANTHER" id="PTHR33149">
    <property type="entry name" value="PHOTOSYSTEM II PROTEIN D1"/>
    <property type="match status" value="1"/>
</dbReference>
<dbReference type="Pfam" id="PF00124">
    <property type="entry name" value="Photo_RC"/>
    <property type="match status" value="1"/>
</dbReference>
<dbReference type="SUPFAM" id="SSF81483">
    <property type="entry name" value="Bacterial photosystem II reaction centre, L and M subunits"/>
    <property type="match status" value="1"/>
</dbReference>
<dbReference type="PROSITE" id="PS00244">
    <property type="entry name" value="REACTION_CENTER"/>
    <property type="match status" value="1"/>
</dbReference>
<feature type="chain" id="PRO_0000090486" description="Photosystem II protein D1 1" evidence="1">
    <location>
        <begin position="1"/>
        <end position="344"/>
    </location>
</feature>
<feature type="propeptide" id="PRO_0000316378" evidence="1">
    <location>
        <begin position="345"/>
        <end position="360"/>
    </location>
</feature>
<feature type="transmembrane region" description="Helical" evidence="1">
    <location>
        <begin position="29"/>
        <end position="46"/>
    </location>
</feature>
<feature type="transmembrane region" description="Helical" evidence="1">
    <location>
        <begin position="118"/>
        <end position="133"/>
    </location>
</feature>
<feature type="transmembrane region" description="Helical" evidence="1">
    <location>
        <begin position="142"/>
        <end position="156"/>
    </location>
</feature>
<feature type="transmembrane region" description="Helical" evidence="1">
    <location>
        <begin position="197"/>
        <end position="218"/>
    </location>
</feature>
<feature type="transmembrane region" description="Helical" evidence="1">
    <location>
        <begin position="274"/>
        <end position="288"/>
    </location>
</feature>
<feature type="binding site" description="axial binding residue" evidence="1">
    <location>
        <position position="118"/>
    </location>
    <ligand>
        <name>chlorophyll a</name>
        <dbReference type="ChEBI" id="CHEBI:58416"/>
        <label>ChlzD1</label>
    </ligand>
    <ligandPart>
        <name>Mg</name>
        <dbReference type="ChEBI" id="CHEBI:25107"/>
    </ligandPart>
</feature>
<feature type="binding site" evidence="1">
    <location>
        <position position="126"/>
    </location>
    <ligand>
        <name>pheophytin a</name>
        <dbReference type="ChEBI" id="CHEBI:136840"/>
        <label>D1</label>
    </ligand>
</feature>
<feature type="binding site" evidence="1">
    <location>
        <position position="170"/>
    </location>
    <ligand>
        <name>[CaMn4O5] cluster</name>
        <dbReference type="ChEBI" id="CHEBI:189552"/>
    </ligand>
</feature>
<feature type="binding site" evidence="1">
    <location>
        <position position="189"/>
    </location>
    <ligand>
        <name>[CaMn4O5] cluster</name>
        <dbReference type="ChEBI" id="CHEBI:189552"/>
    </ligand>
</feature>
<feature type="binding site" description="axial binding residue" evidence="1">
    <location>
        <position position="198"/>
    </location>
    <ligand>
        <name>chlorophyll a</name>
        <dbReference type="ChEBI" id="CHEBI:58416"/>
        <label>PD1</label>
    </ligand>
    <ligandPart>
        <name>Mg</name>
        <dbReference type="ChEBI" id="CHEBI:25107"/>
    </ligandPart>
</feature>
<feature type="binding site" evidence="1">
    <location>
        <position position="215"/>
    </location>
    <ligand>
        <name>a quinone</name>
        <dbReference type="ChEBI" id="CHEBI:132124"/>
        <label>B</label>
    </ligand>
</feature>
<feature type="binding site" evidence="1">
    <location>
        <position position="215"/>
    </location>
    <ligand>
        <name>Fe cation</name>
        <dbReference type="ChEBI" id="CHEBI:24875"/>
        <note>ligand shared with heterodimeric partner</note>
    </ligand>
</feature>
<feature type="binding site" evidence="1">
    <location>
        <begin position="264"/>
        <end position="265"/>
    </location>
    <ligand>
        <name>a quinone</name>
        <dbReference type="ChEBI" id="CHEBI:132124"/>
        <label>B</label>
    </ligand>
</feature>
<feature type="binding site" evidence="1">
    <location>
        <position position="272"/>
    </location>
    <ligand>
        <name>Fe cation</name>
        <dbReference type="ChEBI" id="CHEBI:24875"/>
        <note>ligand shared with heterodimeric partner</note>
    </ligand>
</feature>
<feature type="binding site" evidence="1">
    <location>
        <position position="332"/>
    </location>
    <ligand>
        <name>[CaMn4O5] cluster</name>
        <dbReference type="ChEBI" id="CHEBI:189552"/>
    </ligand>
</feature>
<feature type="binding site" evidence="1">
    <location>
        <position position="333"/>
    </location>
    <ligand>
        <name>[CaMn4O5] cluster</name>
        <dbReference type="ChEBI" id="CHEBI:189552"/>
    </ligand>
</feature>
<feature type="binding site" evidence="1">
    <location>
        <position position="342"/>
    </location>
    <ligand>
        <name>[CaMn4O5] cluster</name>
        <dbReference type="ChEBI" id="CHEBI:189552"/>
    </ligand>
</feature>
<feature type="binding site" evidence="1">
    <location>
        <position position="344"/>
    </location>
    <ligand>
        <name>[CaMn4O5] cluster</name>
        <dbReference type="ChEBI" id="CHEBI:189552"/>
    </ligand>
</feature>
<feature type="site" description="Tyrosine radical intermediate" evidence="1">
    <location>
        <position position="161"/>
    </location>
</feature>
<feature type="site" description="Stabilizes free radical intermediate" evidence="1">
    <location>
        <position position="190"/>
    </location>
</feature>
<feature type="site" description="Cleavage; by CtpA" evidence="1">
    <location>
        <begin position="344"/>
        <end position="345"/>
    </location>
</feature>
<feature type="sequence conflict" description="In Ref. 2; CAA78895." evidence="2" ref="2">
    <original>S</original>
    <variation>T</variation>
    <location>
        <position position="134"/>
    </location>
</feature>
<organism>
    <name type="scientific">Synechococcus elongatus</name>
    <dbReference type="NCBI Taxonomy" id="32046"/>
    <lineage>
        <taxon>Bacteria</taxon>
        <taxon>Bacillati</taxon>
        <taxon>Cyanobacteriota</taxon>
        <taxon>Cyanophyceae</taxon>
        <taxon>Synechococcales</taxon>
        <taxon>Synechococcaceae</taxon>
        <taxon>Synechococcus</taxon>
    </lineage>
</organism>
<sequence>MTTTLQRRESANLWERFCNWVTSTDNRLYVGWFGVIMIPTLLAATICFVIAFIAAPPVDIDGIREPVSGSLLYGNNIITGAVVPSSNAIGLHFYPIWEAASLDEWLYNGGPYQLIIFHFLLGASCYMGRQWELSYRLGMRPWICVAYSAPLASAFAVFLIYPIGQGSFSDGMPLGISGTFNFMIVFQAEHNILMHPFHQLGVAGVFGGALFCAMHGSLVTSSLIRETTETESANYGYKFGQEEETYNIVAAHGYFGRLIFQYASFNNSRSLHFFLAAWPVVGVWFTALGISTMAFNLNGFNFNHSVIDAKGNVINTWADIINRANLGMEVMHERNAHNFPLDLASAESAPVAMIAPSING</sequence>
<keyword id="KW-0106">Calcium</keyword>
<keyword id="KW-0148">Chlorophyll</keyword>
<keyword id="KW-0157">Chromophore</keyword>
<keyword id="KW-0249">Electron transport</keyword>
<keyword id="KW-0359">Herbicide resistance</keyword>
<keyword id="KW-0408">Iron</keyword>
<keyword id="KW-0460">Magnesium</keyword>
<keyword id="KW-0464">Manganese</keyword>
<keyword id="KW-0472">Membrane</keyword>
<keyword id="KW-0479">Metal-binding</keyword>
<keyword id="KW-0560">Oxidoreductase</keyword>
<keyword id="KW-0602">Photosynthesis</keyword>
<keyword id="KW-0604">Photosystem II</keyword>
<keyword id="KW-0793">Thylakoid</keyword>
<keyword id="KW-0812">Transmembrane</keyword>
<keyword id="KW-1133">Transmembrane helix</keyword>
<keyword id="KW-0813">Transport</keyword>
<evidence type="ECO:0000255" key="1">
    <source>
        <dbReference type="HAMAP-Rule" id="MF_01379"/>
    </source>
</evidence>
<evidence type="ECO:0000305" key="2"/>